<gene>
    <name evidence="1" type="primary">ftsZ</name>
    <name type="ordered locus">MG224</name>
</gene>
<accession>P47466</accession>
<name>FTSZ_MYCGE</name>
<evidence type="ECO:0000255" key="1">
    <source>
        <dbReference type="HAMAP-Rule" id="MF_00909"/>
    </source>
</evidence>
<organism>
    <name type="scientific">Mycoplasma genitalium (strain ATCC 33530 / DSM 19775 / NCTC 10195 / G37)</name>
    <name type="common">Mycoplasmoides genitalium</name>
    <dbReference type="NCBI Taxonomy" id="243273"/>
    <lineage>
        <taxon>Bacteria</taxon>
        <taxon>Bacillati</taxon>
        <taxon>Mycoplasmatota</taxon>
        <taxon>Mycoplasmoidales</taxon>
        <taxon>Mycoplasmoidaceae</taxon>
        <taxon>Mycoplasmoides</taxon>
    </lineage>
</organism>
<keyword id="KW-0131">Cell cycle</keyword>
<keyword id="KW-0132">Cell division</keyword>
<keyword id="KW-0963">Cytoplasm</keyword>
<keyword id="KW-0342">GTP-binding</keyword>
<keyword id="KW-0547">Nucleotide-binding</keyword>
<keyword id="KW-1185">Reference proteome</keyword>
<keyword id="KW-0717">Septation</keyword>
<dbReference type="EMBL" id="L43967">
    <property type="protein sequence ID" value="AAC71445.1"/>
    <property type="molecule type" value="Genomic_DNA"/>
</dbReference>
<dbReference type="PIR" id="G64224">
    <property type="entry name" value="G64224"/>
</dbReference>
<dbReference type="RefSeq" id="WP_010869382.1">
    <property type="nucleotide sequence ID" value="NC_000908.2"/>
</dbReference>
<dbReference type="SMR" id="P47466"/>
<dbReference type="FunCoup" id="P47466">
    <property type="interactions" value="197"/>
</dbReference>
<dbReference type="STRING" id="243273.MG_224"/>
<dbReference type="GeneID" id="88282369"/>
<dbReference type="KEGG" id="mge:MG_224"/>
<dbReference type="eggNOG" id="COG0206">
    <property type="taxonomic scope" value="Bacteria"/>
</dbReference>
<dbReference type="HOGENOM" id="CLU_024865_1_1_14"/>
<dbReference type="InParanoid" id="P47466"/>
<dbReference type="OrthoDB" id="9813375at2"/>
<dbReference type="BioCyc" id="MGEN243273:G1GJ2-270-MONOMER"/>
<dbReference type="Proteomes" id="UP000000807">
    <property type="component" value="Chromosome"/>
</dbReference>
<dbReference type="GO" id="GO:0032153">
    <property type="term" value="C:cell division site"/>
    <property type="evidence" value="ECO:0000318"/>
    <property type="project" value="GO_Central"/>
</dbReference>
<dbReference type="GO" id="GO:0005737">
    <property type="term" value="C:cytoplasm"/>
    <property type="evidence" value="ECO:0000318"/>
    <property type="project" value="GO_Central"/>
</dbReference>
<dbReference type="GO" id="GO:0005525">
    <property type="term" value="F:GTP binding"/>
    <property type="evidence" value="ECO:0000318"/>
    <property type="project" value="GO_Central"/>
</dbReference>
<dbReference type="GO" id="GO:0003924">
    <property type="term" value="F:GTPase activity"/>
    <property type="evidence" value="ECO:0000318"/>
    <property type="project" value="GO_Central"/>
</dbReference>
<dbReference type="GO" id="GO:0051301">
    <property type="term" value="P:cell division"/>
    <property type="evidence" value="ECO:0000315"/>
    <property type="project" value="CACAO"/>
</dbReference>
<dbReference type="GO" id="GO:0000917">
    <property type="term" value="P:division septum assembly"/>
    <property type="evidence" value="ECO:0007669"/>
    <property type="project" value="UniProtKB-KW"/>
</dbReference>
<dbReference type="GO" id="GO:0043093">
    <property type="term" value="P:FtsZ-dependent cytokinesis"/>
    <property type="evidence" value="ECO:0007669"/>
    <property type="project" value="UniProtKB-UniRule"/>
</dbReference>
<dbReference type="GO" id="GO:0051258">
    <property type="term" value="P:protein polymerization"/>
    <property type="evidence" value="ECO:0007669"/>
    <property type="project" value="UniProtKB-UniRule"/>
</dbReference>
<dbReference type="CDD" id="cd02201">
    <property type="entry name" value="FtsZ_type1"/>
    <property type="match status" value="1"/>
</dbReference>
<dbReference type="Gene3D" id="3.40.50.1440">
    <property type="entry name" value="Tubulin/FtsZ, GTPase domain"/>
    <property type="match status" value="1"/>
</dbReference>
<dbReference type="HAMAP" id="MF_00909">
    <property type="entry name" value="FtsZ"/>
    <property type="match status" value="1"/>
</dbReference>
<dbReference type="InterPro" id="IPR000158">
    <property type="entry name" value="Cell_div_FtsZ"/>
</dbReference>
<dbReference type="InterPro" id="IPR020805">
    <property type="entry name" value="Cell_div_FtsZ_CS"/>
</dbReference>
<dbReference type="InterPro" id="IPR045061">
    <property type="entry name" value="FtsZ/CetZ"/>
</dbReference>
<dbReference type="InterPro" id="IPR036525">
    <property type="entry name" value="Tubulin/FtsZ_GTPase_sf"/>
</dbReference>
<dbReference type="InterPro" id="IPR003008">
    <property type="entry name" value="Tubulin_FtsZ_GTPase"/>
</dbReference>
<dbReference type="NCBIfam" id="TIGR00065">
    <property type="entry name" value="ftsZ"/>
    <property type="match status" value="1"/>
</dbReference>
<dbReference type="PANTHER" id="PTHR30314">
    <property type="entry name" value="CELL DIVISION PROTEIN FTSZ-RELATED"/>
    <property type="match status" value="1"/>
</dbReference>
<dbReference type="PANTHER" id="PTHR30314:SF3">
    <property type="entry name" value="MITOCHONDRIAL DIVISION PROTEIN FSZA"/>
    <property type="match status" value="1"/>
</dbReference>
<dbReference type="Pfam" id="PF00091">
    <property type="entry name" value="Tubulin"/>
    <property type="match status" value="1"/>
</dbReference>
<dbReference type="PRINTS" id="PR00423">
    <property type="entry name" value="CELLDVISFTSZ"/>
</dbReference>
<dbReference type="SMART" id="SM00864">
    <property type="entry name" value="Tubulin"/>
    <property type="match status" value="1"/>
</dbReference>
<dbReference type="SUPFAM" id="SSF52490">
    <property type="entry name" value="Tubulin nucleotide-binding domain-like"/>
    <property type="match status" value="1"/>
</dbReference>
<dbReference type="PROSITE" id="PS01134">
    <property type="entry name" value="FTSZ_1"/>
    <property type="match status" value="1"/>
</dbReference>
<dbReference type="PROSITE" id="PS01135">
    <property type="entry name" value="FTSZ_2"/>
    <property type="match status" value="1"/>
</dbReference>
<sequence>MDENETQFNKLNQVKNKLKIGVFGIGGAGNNIVDASLYHYPNLASENIHFYAINSDLQHLAFKTNVKNKLLIQDHTNKGFGAGGDPAKGASLAISFQEQFNTLTDGYDFCILVAGFGKGTGTGATPVFSKILKTKKILNVAIVTYPSLNEGLTVRNKATKGLEILNKATDSYMLFCNEKCTNGIYQLANTEIVSAIKNLIELITIPLQQNIDFEDVRAFFQTKKTNQDQQLFTVTHPFSFSFDSKDSIEQFAKQFKNFEKVSYFDHSIVGAKKVLLKANINQKIVKLNFKQIQDIIWTKIDNYQLEIRLGVDFVTTIPNIQIFILSEHKNPVSLPIDNKSTENNQNKLKLLDELKELGMKYVKHQNQIY</sequence>
<reference key="1">
    <citation type="journal article" date="1995" name="Science">
        <title>The minimal gene complement of Mycoplasma genitalium.</title>
        <authorList>
            <person name="Fraser C.M."/>
            <person name="Gocayne J.D."/>
            <person name="White O."/>
            <person name="Adams M.D."/>
            <person name="Clayton R.A."/>
            <person name="Fleischmann R.D."/>
            <person name="Bult C.J."/>
            <person name="Kerlavage A.R."/>
            <person name="Sutton G.G."/>
            <person name="Kelley J.M."/>
            <person name="Fritchman J.L."/>
            <person name="Weidman J.F."/>
            <person name="Small K.V."/>
            <person name="Sandusky M."/>
            <person name="Fuhrmann J.L."/>
            <person name="Nguyen D.T."/>
            <person name="Utterback T.R."/>
            <person name="Saudek D.M."/>
            <person name="Phillips C.A."/>
            <person name="Merrick J.M."/>
            <person name="Tomb J.-F."/>
            <person name="Dougherty B.A."/>
            <person name="Bott K.F."/>
            <person name="Hu P.-C."/>
            <person name="Lucier T.S."/>
            <person name="Peterson S.N."/>
            <person name="Smith H.O."/>
            <person name="Hutchison C.A. III"/>
            <person name="Venter J.C."/>
        </authorList>
    </citation>
    <scope>NUCLEOTIDE SEQUENCE [LARGE SCALE GENOMIC DNA]</scope>
    <source>
        <strain>ATCC 33530 / DSM 19775 / NCTC 10195 / G37</strain>
    </source>
</reference>
<proteinExistence type="inferred from homology"/>
<comment type="function">
    <text evidence="1">Essential cell division protein that forms a contractile ring structure (Z ring) at the future cell division site. The regulation of the ring assembly controls the timing and the location of cell division. One of the functions of the FtsZ ring is to recruit other cell division proteins to the septum to produce a new cell wall between the dividing cells. Binds GTP and shows GTPase activity.</text>
</comment>
<comment type="subunit">
    <text evidence="1">Homodimer. Polymerizes to form a dynamic ring structure in a strictly GTP-dependent manner. Interacts directly with several other division proteins.</text>
</comment>
<comment type="subcellular location">
    <subcellularLocation>
        <location evidence="1">Cytoplasm</location>
    </subcellularLocation>
    <text evidence="1">Assembles at midcell at the inner surface of the cytoplasmic membrane.</text>
</comment>
<comment type="similarity">
    <text evidence="1">Belongs to the FtsZ family.</text>
</comment>
<protein>
    <recommendedName>
        <fullName evidence="1">Cell division protein FtsZ</fullName>
    </recommendedName>
</protein>
<feature type="chain" id="PRO_0000114360" description="Cell division protein FtsZ">
    <location>
        <begin position="1"/>
        <end position="369"/>
    </location>
</feature>
<feature type="binding site" evidence="1">
    <location>
        <begin position="27"/>
        <end position="31"/>
    </location>
    <ligand>
        <name>GTP</name>
        <dbReference type="ChEBI" id="CHEBI:37565"/>
    </ligand>
</feature>
<feature type="binding site" evidence="1">
    <location>
        <begin position="119"/>
        <end position="121"/>
    </location>
    <ligand>
        <name>GTP</name>
        <dbReference type="ChEBI" id="CHEBI:37565"/>
    </ligand>
</feature>
<feature type="binding site" evidence="1">
    <location>
        <position position="150"/>
    </location>
    <ligand>
        <name>GTP</name>
        <dbReference type="ChEBI" id="CHEBI:37565"/>
    </ligand>
</feature>
<feature type="binding site" evidence="1">
    <location>
        <position position="189"/>
    </location>
    <ligand>
        <name>GTP</name>
        <dbReference type="ChEBI" id="CHEBI:37565"/>
    </ligand>
</feature>